<sequence>MASRTEHADLSDLSGDSGFKRIATISLAALGVVFGDIGTSPLYAIRECFHGDYSIPVSQQNVLGVLSLIFWALVLIVSLKYLTFIMKADNEGEGGILALTALIVAHSKKNRHERWFLVGIGLFGASLLYGDGMITPAISVLSAVEGLQIIAPAFKDLVIPITVIILTGLFLYQHNGTARVGALFGPVILLWFAVIGVLGLVEIVRYPEILRAVLPWYGFSFLLNNHLQGFMVLGAVFLSVTGAEALYADMGHFGKTPIRFTWILFVLPALLLNYFGQGALLLFAPQESHHPFYGLVPSWAMIPMVILATSATIIASQALITGVFSLTQQAIQLGYLPRITVKHTSAGHRGQIYVPGANWALMYATIGLVIGFGSSSKLAAAYGVAVTATMLISTILFYYVARDIWRWNKLATNLLVSFFFVIDLAFFGASATKLFHGAWFPLVIGLVLFTLMLTWKQGRSLLLQQIKDRTLTVEEFVQSLALQQPQRVTGQAVYLTANPDVIPIALLHNLRHNKILHSEVALFHFSLERVPRVPNSKKVEIKKYGDGLCRVVARYGFMEYPSIRQVFSLAQEKGLHFRLETTSFFLSREKIVTGLKSKMGLWRKKLFALMVRNALSATSYYDMPSGQVIEIGMQVQI</sequence>
<evidence type="ECO:0000255" key="1">
    <source>
        <dbReference type="HAMAP-Rule" id="MF_01522"/>
    </source>
</evidence>
<reference key="1">
    <citation type="submission" date="2006-12" db="EMBL/GenBank/DDBJ databases">
        <title>Complete sequence of Chlorobium phaeobacteroides DSM 266.</title>
        <authorList>
            <consortium name="US DOE Joint Genome Institute"/>
            <person name="Copeland A."/>
            <person name="Lucas S."/>
            <person name="Lapidus A."/>
            <person name="Barry K."/>
            <person name="Detter J.C."/>
            <person name="Glavina del Rio T."/>
            <person name="Hammon N."/>
            <person name="Israni S."/>
            <person name="Pitluck S."/>
            <person name="Goltsman E."/>
            <person name="Schmutz J."/>
            <person name="Larimer F."/>
            <person name="Land M."/>
            <person name="Hauser L."/>
            <person name="Mikhailova N."/>
            <person name="Li T."/>
            <person name="Overmann J."/>
            <person name="Bryant D.A."/>
            <person name="Richardson P."/>
        </authorList>
    </citation>
    <scope>NUCLEOTIDE SEQUENCE [LARGE SCALE GENOMIC DNA]</scope>
    <source>
        <strain>DSM 266 / SMG 266 / 2430</strain>
    </source>
</reference>
<dbReference type="EMBL" id="CP000492">
    <property type="protein sequence ID" value="ABL65794.1"/>
    <property type="molecule type" value="Genomic_DNA"/>
</dbReference>
<dbReference type="RefSeq" id="WP_011745601.1">
    <property type="nucleotide sequence ID" value="NC_008639.1"/>
</dbReference>
<dbReference type="STRING" id="290317.Cpha266_1777"/>
<dbReference type="KEGG" id="cph:Cpha266_1777"/>
<dbReference type="eggNOG" id="COG3158">
    <property type="taxonomic scope" value="Bacteria"/>
</dbReference>
<dbReference type="HOGENOM" id="CLU_008142_4_2_10"/>
<dbReference type="Proteomes" id="UP000008701">
    <property type="component" value="Chromosome"/>
</dbReference>
<dbReference type="GO" id="GO:0005886">
    <property type="term" value="C:plasma membrane"/>
    <property type="evidence" value="ECO:0007669"/>
    <property type="project" value="UniProtKB-SubCell"/>
</dbReference>
<dbReference type="GO" id="GO:0015079">
    <property type="term" value="F:potassium ion transmembrane transporter activity"/>
    <property type="evidence" value="ECO:0007669"/>
    <property type="project" value="UniProtKB-UniRule"/>
</dbReference>
<dbReference type="GO" id="GO:0015293">
    <property type="term" value="F:symporter activity"/>
    <property type="evidence" value="ECO:0007669"/>
    <property type="project" value="UniProtKB-UniRule"/>
</dbReference>
<dbReference type="HAMAP" id="MF_01522">
    <property type="entry name" value="Kup"/>
    <property type="match status" value="1"/>
</dbReference>
<dbReference type="InterPro" id="IPR003855">
    <property type="entry name" value="K+_transporter"/>
</dbReference>
<dbReference type="InterPro" id="IPR053952">
    <property type="entry name" value="K_trans_C"/>
</dbReference>
<dbReference type="InterPro" id="IPR053951">
    <property type="entry name" value="K_trans_N"/>
</dbReference>
<dbReference type="InterPro" id="IPR023051">
    <property type="entry name" value="Kup"/>
</dbReference>
<dbReference type="PANTHER" id="PTHR30540:SF79">
    <property type="entry name" value="LOW AFFINITY POTASSIUM TRANSPORT SYSTEM PROTEIN KUP"/>
    <property type="match status" value="1"/>
</dbReference>
<dbReference type="PANTHER" id="PTHR30540">
    <property type="entry name" value="OSMOTIC STRESS POTASSIUM TRANSPORTER"/>
    <property type="match status" value="1"/>
</dbReference>
<dbReference type="Pfam" id="PF02705">
    <property type="entry name" value="K_trans"/>
    <property type="match status" value="1"/>
</dbReference>
<dbReference type="Pfam" id="PF22776">
    <property type="entry name" value="K_trans_C"/>
    <property type="match status" value="1"/>
</dbReference>
<organism>
    <name type="scientific">Chlorobium phaeobacteroides (strain DSM 266 / SMG 266 / 2430)</name>
    <dbReference type="NCBI Taxonomy" id="290317"/>
    <lineage>
        <taxon>Bacteria</taxon>
        <taxon>Pseudomonadati</taxon>
        <taxon>Chlorobiota</taxon>
        <taxon>Chlorobiia</taxon>
        <taxon>Chlorobiales</taxon>
        <taxon>Chlorobiaceae</taxon>
        <taxon>Chlorobium/Pelodictyon group</taxon>
        <taxon>Chlorobium</taxon>
    </lineage>
</organism>
<gene>
    <name evidence="1" type="primary">kup</name>
    <name type="ordered locus">Cpha266_1777</name>
</gene>
<comment type="function">
    <text evidence="1">Transport of potassium into the cell. Likely operates as a K(+):H(+) symporter.</text>
</comment>
<comment type="catalytic activity">
    <reaction evidence="1">
        <text>K(+)(in) + H(+)(in) = K(+)(out) + H(+)(out)</text>
        <dbReference type="Rhea" id="RHEA:28490"/>
        <dbReference type="ChEBI" id="CHEBI:15378"/>
        <dbReference type="ChEBI" id="CHEBI:29103"/>
    </reaction>
    <physiologicalReaction direction="right-to-left" evidence="1">
        <dbReference type="Rhea" id="RHEA:28492"/>
    </physiologicalReaction>
</comment>
<comment type="subcellular location">
    <subcellularLocation>
        <location evidence="1">Cell inner membrane</location>
        <topology evidence="1">Multi-pass membrane protein</topology>
    </subcellularLocation>
</comment>
<comment type="similarity">
    <text evidence="1">Belongs to the HAK/KUP transporter (TC 2.A.72) family.</text>
</comment>
<name>KUP_CHLPD</name>
<accession>A1BHB7</accession>
<protein>
    <recommendedName>
        <fullName evidence="1">Probable potassium transport system protein Kup</fullName>
    </recommendedName>
</protein>
<proteinExistence type="inferred from homology"/>
<feature type="chain" id="PRO_0000279777" description="Probable potassium transport system protein Kup">
    <location>
        <begin position="1"/>
        <end position="637"/>
    </location>
</feature>
<feature type="transmembrane region" description="Helical" evidence="1">
    <location>
        <begin position="25"/>
        <end position="45"/>
    </location>
</feature>
<feature type="transmembrane region" description="Helical" evidence="1">
    <location>
        <begin position="62"/>
        <end position="82"/>
    </location>
</feature>
<feature type="transmembrane region" description="Helical" evidence="1">
    <location>
        <begin position="115"/>
        <end position="135"/>
    </location>
</feature>
<feature type="transmembrane region" description="Helical" evidence="1">
    <location>
        <begin position="149"/>
        <end position="169"/>
    </location>
</feature>
<feature type="transmembrane region" description="Helical" evidence="1">
    <location>
        <begin position="180"/>
        <end position="200"/>
    </location>
</feature>
<feature type="transmembrane region" description="Helical" evidence="1">
    <location>
        <begin position="227"/>
        <end position="247"/>
    </location>
</feature>
<feature type="transmembrane region" description="Helical" evidence="1">
    <location>
        <begin position="263"/>
        <end position="283"/>
    </location>
</feature>
<feature type="transmembrane region" description="Helical" evidence="1">
    <location>
        <begin position="295"/>
        <end position="315"/>
    </location>
</feature>
<feature type="transmembrane region" description="Helical" evidence="1">
    <location>
        <begin position="352"/>
        <end position="372"/>
    </location>
</feature>
<feature type="transmembrane region" description="Helical" evidence="1">
    <location>
        <begin position="378"/>
        <end position="398"/>
    </location>
</feature>
<feature type="transmembrane region" description="Helical" evidence="1">
    <location>
        <begin position="410"/>
        <end position="430"/>
    </location>
</feature>
<feature type="transmembrane region" description="Helical" evidence="1">
    <location>
        <begin position="434"/>
        <end position="454"/>
    </location>
</feature>
<keyword id="KW-0997">Cell inner membrane</keyword>
<keyword id="KW-1003">Cell membrane</keyword>
<keyword id="KW-0406">Ion transport</keyword>
<keyword id="KW-0472">Membrane</keyword>
<keyword id="KW-0630">Potassium</keyword>
<keyword id="KW-0633">Potassium transport</keyword>
<keyword id="KW-1185">Reference proteome</keyword>
<keyword id="KW-0769">Symport</keyword>
<keyword id="KW-0812">Transmembrane</keyword>
<keyword id="KW-1133">Transmembrane helix</keyword>
<keyword id="KW-0813">Transport</keyword>